<comment type="function">
    <text evidence="1">F(1)F(0) ATP synthase produces ATP from ADP in the presence of a proton or sodium gradient. F-type ATPases consist of two structural domains, F(1) containing the extramembraneous catalytic core and F(0) containing the membrane proton channel, linked together by a central stalk and a peripheral stalk. During catalysis, ATP synthesis in the catalytic domain of F(1) is coupled via a rotary mechanism of the central stalk subunits to proton translocation.</text>
</comment>
<comment type="function">
    <text evidence="1">This protein is part of the stalk that links CF(0) to CF(1). It either transmits conformational changes from CF(0) to CF(1) or is implicated in proton conduction.</text>
</comment>
<comment type="subunit">
    <text evidence="1">F-type ATPases have 2 components, F(1) - the catalytic core - and F(0) - the membrane proton channel. F(1) has five subunits: alpha(3), beta(3), gamma(1), delta(1), epsilon(1). F(0) has three main subunits: a(1), b(2) and c(10-14). The alpha and beta chains form an alternating ring which encloses part of the gamma chain. F(1) is attached to F(0) by a central stalk formed by the gamma and epsilon chains, while a peripheral stalk is formed by the delta and b chains.</text>
</comment>
<comment type="subcellular location">
    <subcellularLocation>
        <location evidence="1">Cell inner membrane</location>
        <topology evidence="1">Peripheral membrane protein</topology>
    </subcellularLocation>
</comment>
<comment type="similarity">
    <text evidence="1">Belongs to the ATPase delta chain family.</text>
</comment>
<gene>
    <name evidence="1" type="primary">atpH</name>
    <name type="ordered locus">ERGA_CDS_00750</name>
</gene>
<name>ATPD_EHRRG</name>
<proteinExistence type="inferred from homology"/>
<accession>Q5FF65</accession>
<feature type="chain" id="PRO_1000184704" description="ATP synthase subunit delta">
    <location>
        <begin position="1"/>
        <end position="189"/>
    </location>
</feature>
<protein>
    <recommendedName>
        <fullName evidence="1">ATP synthase subunit delta</fullName>
    </recommendedName>
    <alternativeName>
        <fullName evidence="1">ATP synthase F(1) sector subunit delta</fullName>
    </alternativeName>
    <alternativeName>
        <fullName evidence="1">F-type ATPase subunit delta</fullName>
        <shortName evidence="1">F-ATPase subunit delta</shortName>
    </alternativeName>
</protein>
<dbReference type="EMBL" id="CR925677">
    <property type="protein sequence ID" value="CAI27527.1"/>
    <property type="molecule type" value="Genomic_DNA"/>
</dbReference>
<dbReference type="RefSeq" id="WP_011154766.1">
    <property type="nucleotide sequence ID" value="NC_006831.1"/>
</dbReference>
<dbReference type="SMR" id="Q5FF65"/>
<dbReference type="GeneID" id="33058147"/>
<dbReference type="KEGG" id="erg:ERGA_CDS_00750"/>
<dbReference type="HOGENOM" id="CLU_085114_2_0_5"/>
<dbReference type="OrthoDB" id="9796185at2"/>
<dbReference type="Proteomes" id="UP000000533">
    <property type="component" value="Chromosome"/>
</dbReference>
<dbReference type="GO" id="GO:0005886">
    <property type="term" value="C:plasma membrane"/>
    <property type="evidence" value="ECO:0007669"/>
    <property type="project" value="UniProtKB-SubCell"/>
</dbReference>
<dbReference type="GO" id="GO:0045259">
    <property type="term" value="C:proton-transporting ATP synthase complex"/>
    <property type="evidence" value="ECO:0007669"/>
    <property type="project" value="UniProtKB-KW"/>
</dbReference>
<dbReference type="GO" id="GO:0046933">
    <property type="term" value="F:proton-transporting ATP synthase activity, rotational mechanism"/>
    <property type="evidence" value="ECO:0007669"/>
    <property type="project" value="UniProtKB-UniRule"/>
</dbReference>
<dbReference type="Gene3D" id="1.10.520.20">
    <property type="entry name" value="N-terminal domain of the delta subunit of the F1F0-ATP synthase"/>
    <property type="match status" value="1"/>
</dbReference>
<dbReference type="HAMAP" id="MF_01416">
    <property type="entry name" value="ATP_synth_delta_bact"/>
    <property type="match status" value="1"/>
</dbReference>
<dbReference type="InterPro" id="IPR026015">
    <property type="entry name" value="ATP_synth_OSCP/delta_N_sf"/>
</dbReference>
<dbReference type="InterPro" id="IPR020781">
    <property type="entry name" value="ATPase_OSCP/d_CS"/>
</dbReference>
<dbReference type="InterPro" id="IPR000711">
    <property type="entry name" value="ATPase_OSCP/dsu"/>
</dbReference>
<dbReference type="NCBIfam" id="TIGR01145">
    <property type="entry name" value="ATP_synt_delta"/>
    <property type="match status" value="1"/>
</dbReference>
<dbReference type="PANTHER" id="PTHR11910">
    <property type="entry name" value="ATP SYNTHASE DELTA CHAIN"/>
    <property type="match status" value="1"/>
</dbReference>
<dbReference type="Pfam" id="PF00213">
    <property type="entry name" value="OSCP"/>
    <property type="match status" value="1"/>
</dbReference>
<dbReference type="PRINTS" id="PR00125">
    <property type="entry name" value="ATPASEDELTA"/>
</dbReference>
<dbReference type="SUPFAM" id="SSF47928">
    <property type="entry name" value="N-terminal domain of the delta subunit of the F1F0-ATP synthase"/>
    <property type="match status" value="1"/>
</dbReference>
<dbReference type="PROSITE" id="PS00389">
    <property type="entry name" value="ATPASE_DELTA"/>
    <property type="match status" value="1"/>
</dbReference>
<keyword id="KW-0066">ATP synthesis</keyword>
<keyword id="KW-0997">Cell inner membrane</keyword>
<keyword id="KW-1003">Cell membrane</keyword>
<keyword id="KW-0139">CF(1)</keyword>
<keyword id="KW-0375">Hydrogen ion transport</keyword>
<keyword id="KW-0406">Ion transport</keyword>
<keyword id="KW-0472">Membrane</keyword>
<keyword id="KW-0813">Transport</keyword>
<reference key="1">
    <citation type="journal article" date="2006" name="J. Bacteriol.">
        <title>Comparative genomic analysis of three strains of Ehrlichia ruminantium reveals an active process of genome size plasticity.</title>
        <authorList>
            <person name="Frutos R."/>
            <person name="Viari A."/>
            <person name="Ferraz C."/>
            <person name="Morgat A."/>
            <person name="Eychenie S."/>
            <person name="Kandassamy Y."/>
            <person name="Chantal I."/>
            <person name="Bensaid A."/>
            <person name="Coissac E."/>
            <person name="Vachiery N."/>
            <person name="Demaille J."/>
            <person name="Martinez D."/>
        </authorList>
    </citation>
    <scope>NUCLEOTIDE SEQUENCE [LARGE SCALE GENOMIC DNA]</scope>
    <source>
        <strain>Gardel</strain>
    </source>
</reference>
<evidence type="ECO:0000255" key="1">
    <source>
        <dbReference type="HAMAP-Rule" id="MF_01416"/>
    </source>
</evidence>
<sequence length="189" mass="21042">MTQYRGGYVTSCYAQALFNASVSKLNDICKGIKFIFNLSENGNNQFLSFLANPTANLKDKISVIELITNHIDTTLSRFILVVVTNNRGNMLLQIFNTFLEYVRKHNKEVSISVTSCSKLTTQEKQGICNALLEKYGKVVSITNTVDPSILGGFIIRVGFDIIDVSLNSYLQSLQELSKIAVRSMVNSKV</sequence>
<organism>
    <name type="scientific">Ehrlichia ruminantium (strain Gardel)</name>
    <dbReference type="NCBI Taxonomy" id="302409"/>
    <lineage>
        <taxon>Bacteria</taxon>
        <taxon>Pseudomonadati</taxon>
        <taxon>Pseudomonadota</taxon>
        <taxon>Alphaproteobacteria</taxon>
        <taxon>Rickettsiales</taxon>
        <taxon>Anaplasmataceae</taxon>
        <taxon>Ehrlichia</taxon>
    </lineage>
</organism>